<feature type="signal peptide" description="Tat-type signal" evidence="3 5">
    <location>
        <begin position="1"/>
        <end position="31"/>
    </location>
</feature>
<feature type="chain" id="PRO_0000428861" description="Laccase">
    <location>
        <begin position="32"/>
        <end position="579"/>
    </location>
</feature>
<feature type="domain" description="Plastocyanin-like 1">
    <location>
        <begin position="82"/>
        <end position="214"/>
    </location>
</feature>
<feature type="domain" description="Plastocyanin-like 2">
    <location>
        <begin position="423"/>
        <end position="530"/>
    </location>
</feature>
<feature type="region of interest" description="Disordered" evidence="4">
    <location>
        <begin position="372"/>
        <end position="401"/>
    </location>
</feature>
<feature type="binding site" description="type 2 copper site" evidence="1">
    <location>
        <position position="145"/>
    </location>
    <ligand>
        <name>Cu cation</name>
        <dbReference type="ChEBI" id="CHEBI:23378"/>
        <label>1</label>
    </ligand>
</feature>
<feature type="binding site" description="type 3 copper site" evidence="1">
    <location>
        <position position="147"/>
    </location>
    <ligand>
        <name>Cu cation</name>
        <dbReference type="ChEBI" id="CHEBI:23378"/>
        <label>2</label>
    </ligand>
</feature>
<feature type="binding site" description="type 3 copper site" evidence="1">
    <location>
        <position position="192"/>
    </location>
    <ligand>
        <name>Cu cation</name>
        <dbReference type="ChEBI" id="CHEBI:23378"/>
        <label>2</label>
    </ligand>
</feature>
<feature type="binding site" description="type 3 copper site" evidence="1">
    <location>
        <position position="194"/>
    </location>
    <ligand>
        <name>Cu cation</name>
        <dbReference type="ChEBI" id="CHEBI:23378"/>
        <label>3</label>
    </ligand>
</feature>
<feature type="binding site" description="type 1 copper site" evidence="1">
    <location>
        <position position="455"/>
    </location>
    <ligand>
        <name>Cu cation</name>
        <dbReference type="ChEBI" id="CHEBI:23378"/>
        <label>4</label>
    </ligand>
</feature>
<feature type="binding site" description="type 2 copper site" evidence="1">
    <location>
        <position position="458"/>
    </location>
    <ligand>
        <name>Cu cation</name>
        <dbReference type="ChEBI" id="CHEBI:23378"/>
        <label>1</label>
    </ligand>
</feature>
<feature type="binding site" description="type 3 copper site" evidence="1">
    <location>
        <position position="460"/>
    </location>
    <ligand>
        <name>Cu cation</name>
        <dbReference type="ChEBI" id="CHEBI:23378"/>
        <label>3</label>
    </ligand>
</feature>
<feature type="binding site" description="type 3 copper site" evidence="1">
    <location>
        <position position="512"/>
    </location>
    <ligand>
        <name>Cu cation</name>
        <dbReference type="ChEBI" id="CHEBI:23378"/>
        <label>3</label>
    </ligand>
</feature>
<feature type="binding site" description="type 1 copper site" evidence="1">
    <location>
        <position position="513"/>
    </location>
    <ligand>
        <name>Cu cation</name>
        <dbReference type="ChEBI" id="CHEBI:23378"/>
        <label>4</label>
    </ligand>
</feature>
<feature type="binding site" description="type 3 copper site" evidence="1">
    <location>
        <position position="514"/>
    </location>
    <ligand>
        <name>Cu cation</name>
        <dbReference type="ChEBI" id="CHEBI:23378"/>
        <label>2</label>
    </ligand>
</feature>
<feature type="binding site" description="type 1 copper site" evidence="1">
    <location>
        <position position="518"/>
    </location>
    <ligand>
        <name>Cu cation</name>
        <dbReference type="ChEBI" id="CHEBI:23378"/>
        <label>4</label>
    </ligand>
</feature>
<feature type="binding site" description="type 1 copper site" evidence="1">
    <location>
        <position position="523"/>
    </location>
    <ligand>
        <name>Cu cation</name>
        <dbReference type="ChEBI" id="CHEBI:23378"/>
        <label>4</label>
    </ligand>
</feature>
<feature type="glycosylation site" description="N-linked (GlcNAc...) asparagine" evidence="2">
    <location>
        <position position="449"/>
    </location>
</feature>
<feature type="glycosylation site" description="N-linked (GlcNAc...) asparagine" evidence="2">
    <location>
        <position position="557"/>
    </location>
</feature>
<proteinExistence type="evidence at protein level"/>
<gene>
    <name type="primary">lccA</name>
    <name type="ordered locus">HVO_B0205</name>
</gene>
<geneLocation type="plasmid">
    <name>pHV3</name>
</geneLocation>
<protein>
    <recommendedName>
        <fullName>Laccase</fullName>
        <ecNumber>1.10.3.2</ecNumber>
    </recommendedName>
    <alternativeName>
        <fullName>LccA multicopper oxidase</fullName>
    </alternativeName>
</protein>
<keyword id="KW-0186">Copper</keyword>
<keyword id="KW-0903">Direct protein sequencing</keyword>
<keyword id="KW-0325">Glycoprotein</keyword>
<keyword id="KW-0479">Metal-binding</keyword>
<keyword id="KW-0560">Oxidoreductase</keyword>
<keyword id="KW-0614">Plasmid</keyword>
<keyword id="KW-1185">Reference proteome</keyword>
<keyword id="KW-0677">Repeat</keyword>
<keyword id="KW-0964">Secreted</keyword>
<keyword id="KW-0732">Signal</keyword>
<organism>
    <name type="scientific">Haloferax volcanii (strain ATCC 29605 / DSM 3757 / JCM 8879 / NBRC 14742 / NCIMB 2012 / VKM B-1768 / DS2)</name>
    <name type="common">Halobacterium volcanii</name>
    <dbReference type="NCBI Taxonomy" id="309800"/>
    <lineage>
        <taxon>Archaea</taxon>
        <taxon>Methanobacteriati</taxon>
        <taxon>Methanobacteriota</taxon>
        <taxon>Stenosarchaea group</taxon>
        <taxon>Halobacteria</taxon>
        <taxon>Halobacteriales</taxon>
        <taxon>Haloferacaceae</taxon>
        <taxon>Haloferax</taxon>
    </lineage>
</organism>
<dbReference type="EC" id="1.10.3.2"/>
<dbReference type="EMBL" id="CP001953">
    <property type="protein sequence ID" value="ADE01515.1"/>
    <property type="molecule type" value="Genomic_DNA"/>
</dbReference>
<dbReference type="SMR" id="D4GPK6"/>
<dbReference type="GlyCosmos" id="D4GPK6">
    <property type="glycosylation" value="2 sites, No reported glycans"/>
</dbReference>
<dbReference type="PaxDb" id="309800-C498_02605"/>
<dbReference type="EnsemblBacteria" id="ADE01515">
    <property type="protein sequence ID" value="ADE01515"/>
    <property type="gene ID" value="HVO_B0205"/>
</dbReference>
<dbReference type="KEGG" id="hvo:HVO_B0205"/>
<dbReference type="eggNOG" id="arCOG03914">
    <property type="taxonomic scope" value="Archaea"/>
</dbReference>
<dbReference type="HOGENOM" id="CLU_009100_4_0_2"/>
<dbReference type="BRENDA" id="1.10.3.2">
    <property type="organism ID" value="2561"/>
</dbReference>
<dbReference type="SABIO-RK" id="D4GPK6"/>
<dbReference type="Proteomes" id="UP000008243">
    <property type="component" value="Plasmid pHV3"/>
</dbReference>
<dbReference type="GO" id="GO:0005576">
    <property type="term" value="C:extracellular region"/>
    <property type="evidence" value="ECO:0007669"/>
    <property type="project" value="UniProtKB-SubCell"/>
</dbReference>
<dbReference type="GO" id="GO:0005507">
    <property type="term" value="F:copper ion binding"/>
    <property type="evidence" value="ECO:0007669"/>
    <property type="project" value="InterPro"/>
</dbReference>
<dbReference type="GO" id="GO:0052716">
    <property type="term" value="F:hydroquinone:oxygen oxidoreductase activity"/>
    <property type="evidence" value="ECO:0007669"/>
    <property type="project" value="UniProtKB-EC"/>
</dbReference>
<dbReference type="CDD" id="cd13844">
    <property type="entry name" value="CuRO_1_BOD_CotA_like"/>
    <property type="match status" value="1"/>
</dbReference>
<dbReference type="CDD" id="cd13868">
    <property type="entry name" value="CuRO_2_CotA_like"/>
    <property type="match status" value="1"/>
</dbReference>
<dbReference type="CDD" id="cd13891">
    <property type="entry name" value="CuRO_3_CotA_like"/>
    <property type="match status" value="1"/>
</dbReference>
<dbReference type="Gene3D" id="2.60.40.420">
    <property type="entry name" value="Cupredoxins - blue copper proteins"/>
    <property type="match status" value="3"/>
</dbReference>
<dbReference type="InterPro" id="IPR011707">
    <property type="entry name" value="Cu-oxidase-like_N"/>
</dbReference>
<dbReference type="InterPro" id="IPR011706">
    <property type="entry name" value="Cu-oxidase_C"/>
</dbReference>
<dbReference type="InterPro" id="IPR045087">
    <property type="entry name" value="Cu-oxidase_fam"/>
</dbReference>
<dbReference type="InterPro" id="IPR008972">
    <property type="entry name" value="Cupredoxin"/>
</dbReference>
<dbReference type="InterPro" id="IPR006311">
    <property type="entry name" value="TAT_signal"/>
</dbReference>
<dbReference type="PANTHER" id="PTHR48267:SF1">
    <property type="entry name" value="BILIRUBIN OXIDASE"/>
    <property type="match status" value="1"/>
</dbReference>
<dbReference type="PANTHER" id="PTHR48267">
    <property type="entry name" value="CUPREDOXIN SUPERFAMILY PROTEIN"/>
    <property type="match status" value="1"/>
</dbReference>
<dbReference type="Pfam" id="PF07731">
    <property type="entry name" value="Cu-oxidase_2"/>
    <property type="match status" value="1"/>
</dbReference>
<dbReference type="Pfam" id="PF07732">
    <property type="entry name" value="Cu-oxidase_3"/>
    <property type="match status" value="1"/>
</dbReference>
<dbReference type="SUPFAM" id="SSF49503">
    <property type="entry name" value="Cupredoxins"/>
    <property type="match status" value="2"/>
</dbReference>
<dbReference type="PROSITE" id="PS51318">
    <property type="entry name" value="TAT"/>
    <property type="match status" value="1"/>
</dbReference>
<sequence length="579" mass="63442">MTDWSRRRFLQTGAALGIAGTLPQTTTEVSAASPTLEKFVQPLPIPSVREPDGQRDGADAYEIAVTEFTQQLHPDLPETTVWGFDGSYPGPTIEADAGSPVHVRFDNSGLPSEHLFPVDDRLGGTTAENHPGYDGPVPEVRTVTHFHGLELDPANDGQSDMWTSPGGVEGPRFDSAWQELPMEQGRTTSTYHDHTLGITRLNAYAGLLGLYSITTDAERELGLPSGDYDIPLLLQDKEFNDDGSLHYPEEFVSAFLGDTAVVNGAVWPYVEVEPRRYRFRILNGANHRSFDLQLESESGSGVPTMYQFAPGHGFLESVVPIGPNGDLDSLLLTPFERGELVVDFSDHAGETLTLANGADMGPELTDLVEFRVSDPSTPPEDASADPTSLSLPTPASYDESDARVTREMTLGTEVRNGLITHTLNGHVFGDEDAPVYPQLGATEIWELQNESGGRHPIHLHLVTFRVIGRGPDGTQPPDPNELGPKDTVRVDPGERVRILVTFEGYTGQFPWHCHMLEHEDNKMMIPFVVENPVADYANEENVVDATGLTDAVGDWRNETLETEVLLEVIDQWRSGDEVA</sequence>
<accession>D4GPK6</accession>
<reference key="1">
    <citation type="journal article" date="2010" name="PLoS ONE">
        <title>The complete genome sequence of Haloferax volcanii DS2, a model archaeon.</title>
        <authorList>
            <person name="Hartman A.L."/>
            <person name="Norais C."/>
            <person name="Badger J.H."/>
            <person name="Delmas S."/>
            <person name="Haldenby S."/>
            <person name="Madupu R."/>
            <person name="Robinson J."/>
            <person name="Khouri H."/>
            <person name="Ren Q."/>
            <person name="Lowe T.M."/>
            <person name="Maupin-Furlow J."/>
            <person name="Pohlschroder M."/>
            <person name="Daniels C."/>
            <person name="Pfeiffer F."/>
            <person name="Allers T."/>
            <person name="Eisen J.A."/>
        </authorList>
    </citation>
    <scope>NUCLEOTIDE SEQUENCE [LARGE SCALE GENOMIC DNA]</scope>
    <source>
        <strain>ATCC 29605 / DSM 3757 / JCM 8879 / NBRC 14742 / NCIMB 2012 / VKM B-1768 / DS2</strain>
    </source>
</reference>
<reference key="2">
    <citation type="journal article" date="2010" name="Appl. Environ. Microbiol.">
        <title>LccA, an archaeal laccase secreted as a highly stable glycoprotein into the extracellular medium by Haloferax volcanii.</title>
        <authorList>
            <person name="Uthandi S."/>
            <person name="Saad B."/>
            <person name="Humbard M.A."/>
            <person name="Maupin-Furlow J.A."/>
        </authorList>
    </citation>
    <scope>PROTEIN SEQUENCE OF N-TERMINUS</scope>
    <scope>FUNCTION</scope>
    <scope>CATALYTIC ACTIVITY</scope>
    <scope>BIOPHYSICOCHEMICAL PROPERTIES</scope>
    <scope>SUBCELLULAR LOCATION</scope>
    <scope>GLYCOSYLATION</scope>
    <scope>ACTIVITY REGULATION</scope>
    <source>
        <strain>DS2 / DS70</strain>
    </source>
</reference>
<comment type="function">
    <text evidence="5">Catalyzes the oxidation of a wide variety of organic substrates, including bilirubin, syringaldazine (SGZ), 2,2'-azino-di-(3-ethylbenzothiazoline)-6-sulfonic acid (ABTS) and dimethoxyphenol (DMP). No oxidation of Fe(2+) or guaiacol.</text>
</comment>
<comment type="catalytic activity">
    <reaction evidence="5">
        <text>4 hydroquinone + O2 = 4 benzosemiquinone + 2 H2O</text>
        <dbReference type="Rhea" id="RHEA:11276"/>
        <dbReference type="ChEBI" id="CHEBI:15377"/>
        <dbReference type="ChEBI" id="CHEBI:15379"/>
        <dbReference type="ChEBI" id="CHEBI:17594"/>
        <dbReference type="ChEBI" id="CHEBI:17977"/>
        <dbReference type="EC" id="1.10.3.2"/>
    </reaction>
</comment>
<comment type="cofactor">
    <cofactor evidence="6">
        <name>Cu(2+)</name>
        <dbReference type="ChEBI" id="CHEBI:29036"/>
    </cofactor>
    <text evidence="6">Binds 4 copper ions per subunit.</text>
</comment>
<comment type="activity regulation">
    <text evidence="5">Inhibited by 1 mM NaN(3), 10 mM thiourea, 10 mM 1,10-phenanthroline, 0.1 mM DL-dithiothreitol (DTT) and 1 mM L-cysteine. The inhibition by DTT and L-cysteine is likely caused by reduction of the oxidized substrate and not by inhibition of the enzyme.</text>
</comment>
<comment type="biophysicochemical properties">
    <absorption>
        <max evidence="5">605 nm</max>
    </absorption>
    <kinetics>
        <KM evidence="5">671 uM for 2,2'-azino-di-(3-ethylbenzothiazoline)-6-sulfonic acid</KM>
        <KM evidence="5">35 uM for syringaldazine</KM>
        <text>kcat is 9.9 sec(-1) with 2,2'-azino-di-(3-ethylbenzothiazoline)-6-sulfonic acid as substrate. kcat is 21.7 sec(-1) with syringaldazine as substrate. Optimal activity at 200 mM salt, with 65% activity at 1 M NaCl.</text>
    </kinetics>
    <phDependence>
        <text evidence="5">Optimum pH is 6.0 for the oxidation of 2,2'-azino-di-(3-ethylbenzothiazoline)-6-sulfonic acid and 8.4 for the oxidation of syringaldazine.</text>
    </phDependence>
    <temperatureDependence>
        <text evidence="5">Optimum temperature is 45-50 degrees Celsius. Highly thermostable.</text>
    </temperatureDependence>
</comment>
<comment type="subcellular location">
    <subcellularLocation>
        <location evidence="5">Secreted</location>
    </subcellularLocation>
</comment>
<comment type="PTM">
    <text>Exported by the Tat system.</text>
</comment>
<comment type="PTM">
    <text evidence="5">Glycosylated.</text>
</comment>
<comment type="similarity">
    <text evidence="6">Belongs to the multicopper oxidase family.</text>
</comment>
<name>LACC_HALVD</name>
<evidence type="ECO:0000250" key="1"/>
<evidence type="ECO:0000255" key="2"/>
<evidence type="ECO:0000255" key="3">
    <source>
        <dbReference type="PROSITE-ProRule" id="PRU00648"/>
    </source>
</evidence>
<evidence type="ECO:0000256" key="4">
    <source>
        <dbReference type="SAM" id="MobiDB-lite"/>
    </source>
</evidence>
<evidence type="ECO:0000269" key="5">
    <source>
    </source>
</evidence>
<evidence type="ECO:0000305" key="6"/>